<organism>
    <name type="scientific">Rattus norvegicus</name>
    <name type="common">Rat</name>
    <dbReference type="NCBI Taxonomy" id="10116"/>
    <lineage>
        <taxon>Eukaryota</taxon>
        <taxon>Metazoa</taxon>
        <taxon>Chordata</taxon>
        <taxon>Craniata</taxon>
        <taxon>Vertebrata</taxon>
        <taxon>Euteleostomi</taxon>
        <taxon>Mammalia</taxon>
        <taxon>Eutheria</taxon>
        <taxon>Euarchontoglires</taxon>
        <taxon>Glires</taxon>
        <taxon>Rodentia</taxon>
        <taxon>Myomorpha</taxon>
        <taxon>Muroidea</taxon>
        <taxon>Muridae</taxon>
        <taxon>Murinae</taxon>
        <taxon>Rattus</taxon>
    </lineage>
</organism>
<gene>
    <name evidence="12" type="primary">Arhgap35</name>
    <name type="synonym">Grlf1</name>
    <name evidence="11" type="synonym">P190A</name>
    <name evidence="11" type="synonym">p190ARHOGAP</name>
</gene>
<comment type="function">
    <text evidence="2 3 9 10">Rho GTPase-activating protein (GAP). Binds several acidic phospholipids which inhibits the Rho GAP activity to promote the Rac GAP activity (PubMed:20439493, PubMed:9852136). This binding is inhibited by phosphorylation by PRKCA (By similarity). Involved in cell differentiation as well as cell adhesion and migration, plays an important role in retinal tissue morphogenesis, neural tube fusion, midline fusion of the cerebral hemispheres and mammary gland branching morphogenesis (PubMed:20439493, PubMed:9852136). Transduces signals from p21-ras to the nucleus, acting via the ras GTPase-activating protein (GAP) (By similarity). Transduces SRC-dependent signals from cell-surface adhesion molecules, such as laminin, to promote neurite outgrowth. Regulates axon outgrowth, guidance and fasciculation (By similarity). Modulates Rho GTPase-dependent F-actin polymerization, organization and assembly, is involved in polarized cell migration and in the positive regulation of ciliogenesis and cilia elongation (By similarity). During mammary gland development, is required in both the epithelial and stromal compartments for ductal outgrowth (By similarity). Represses transcription of the glucocorticoid receptor by binding to the cis-acting regulatory sequence 5'-GAGAAAAGAAACTGGAGAAACTC-3'; this function is however unclear and would need additional experimental evidences (By similarity).</text>
</comment>
<comment type="subunit">
    <text evidence="2 3">Interacts with RASA1 (By similarity). Interacts with the general transcription factor GTF2I, the interaction sequesters GTF2I in the cytoplasm (By similarity).</text>
</comment>
<comment type="subcellular location">
    <subcellularLocation>
        <location evidence="2">Cytoplasm</location>
        <location evidence="2">Cytoskeleton</location>
        <location evidence="2">Cilium basal body</location>
    </subcellularLocation>
    <subcellularLocation>
        <location evidence="8">Cytoplasm</location>
    </subcellularLocation>
    <subcellularLocation>
        <location evidence="8">Nucleus</location>
    </subcellularLocation>
    <subcellularLocation>
        <location evidence="2">Cell membrane</location>
    </subcellularLocation>
    <text evidence="2">In response to integrins and SDC4 and upon phosphorylation by PKC, relocalizes from the cytoplasm to regions of plasma membrane ruffling where it colocalizes with polymerized actin.</text>
</comment>
<comment type="tissue specificity">
    <text>Ubiquitously expressed.</text>
</comment>
<comment type="domain">
    <text evidence="2">N-terminal part (1-266) has GTPase activity. Required for proper cellular localization.</text>
</comment>
<comment type="domain">
    <text evidence="1">The pG1 pseudoGTPase domain does not bind GTP.</text>
</comment>
<comment type="PTM">
    <text evidence="2 3 9">Phosphorylation of Tyr-1105 by PTK6 promotes the association with RASA1, inactivating RHOA while activating RAS. Phosphorylation at Tyr-308 by PDGFRA inhibits binding to GTF2I (By similarity). Phosphorylated by PRKCA at Ser-1221 and Thr-1226, induces relocalization from the cytoplasm to regions of plasma membrane ruffling and prevents the binding and substrate specificity regulation by phospholipids (By similarity). In brain, phosphorylated by FYN and SRC (By similarity). During focal adhesion formation, phosphorylated by MAPK1 and MAPK3 at the C-terminal region, probably at Ser-1451, Ser-1476, Thr-1480 and Ser-1483. Phosphorylation by MAPK1 and MAPK3 inhibits GAP function and localizes ARGHAP35 away from newly forming focal adhesions and stress fibers in cells spreading on fibronectin (PubMed:20439493). Phosphorylation at Ser-1476 and Thr-1480 by GSK3B requires priming by MAPK and inhibits RhoGAP activity and modulates polarized cell migration (By similarity).</text>
</comment>
<keyword id="KW-0002">3D-structure</keyword>
<keyword id="KW-1003">Cell membrane</keyword>
<keyword id="KW-0966">Cell projection</keyword>
<keyword id="KW-0963">Cytoplasm</keyword>
<keyword id="KW-0206">Cytoskeleton</keyword>
<keyword id="KW-0903">Direct protein sequencing</keyword>
<keyword id="KW-0238">DNA-binding</keyword>
<keyword id="KW-0342">GTP-binding</keyword>
<keyword id="KW-0343">GTPase activation</keyword>
<keyword id="KW-0446">Lipid-binding</keyword>
<keyword id="KW-0472">Membrane</keyword>
<keyword id="KW-0547">Nucleotide-binding</keyword>
<keyword id="KW-0539">Nucleus</keyword>
<keyword id="KW-0597">Phosphoprotein</keyword>
<keyword id="KW-1185">Reference proteome</keyword>
<keyword id="KW-0677">Repeat</keyword>
<keyword id="KW-0678">Repressor</keyword>
<keyword id="KW-0804">Transcription</keyword>
<keyword id="KW-0805">Transcription regulation</keyword>
<protein>
    <recommendedName>
        <fullName evidence="12">Rho GTPase-activating protein 35</fullName>
    </recommendedName>
    <alternativeName>
        <fullName>GAP-associated protein p190</fullName>
    </alternativeName>
    <alternativeName>
        <fullName>Glucocorticoid receptor DNA-binding factor 1</fullName>
    </alternativeName>
</protein>
<evidence type="ECO:0000250" key="1">
    <source>
        <dbReference type="UniProtKB" id="Q6NU25"/>
    </source>
</evidence>
<evidence type="ECO:0000250" key="2">
    <source>
        <dbReference type="UniProtKB" id="Q91YM2"/>
    </source>
</evidence>
<evidence type="ECO:0000250" key="3">
    <source>
        <dbReference type="UniProtKB" id="Q9NRY4"/>
    </source>
</evidence>
<evidence type="ECO:0000255" key="4">
    <source>
        <dbReference type="PROSITE-ProRule" id="PRU00172"/>
    </source>
</evidence>
<evidence type="ECO:0000255" key="5">
    <source>
        <dbReference type="PROSITE-ProRule" id="PRU01199"/>
    </source>
</evidence>
<evidence type="ECO:0000255" key="6">
    <source>
        <dbReference type="PROSITE-ProRule" id="PRU01200"/>
    </source>
</evidence>
<evidence type="ECO:0000256" key="7">
    <source>
        <dbReference type="SAM" id="MobiDB-lite"/>
    </source>
</evidence>
<evidence type="ECO:0000269" key="8">
    <source>
    </source>
</evidence>
<evidence type="ECO:0000269" key="9">
    <source>
    </source>
</evidence>
<evidence type="ECO:0000269" key="10">
    <source>
    </source>
</evidence>
<evidence type="ECO:0000303" key="11">
    <source>
    </source>
</evidence>
<evidence type="ECO:0000312" key="12">
    <source>
        <dbReference type="RGD" id="1308738"/>
    </source>
</evidence>
<evidence type="ECO:0007744" key="13">
    <source>
    </source>
</evidence>
<evidence type="ECO:0007829" key="14">
    <source>
        <dbReference type="PDB" id="5IRC"/>
    </source>
</evidence>
<evidence type="ECO:0007829" key="15">
    <source>
        <dbReference type="PDB" id="6D4G"/>
    </source>
</evidence>
<dbReference type="EMBL" id="M94721">
    <property type="status" value="NOT_ANNOTATED_CDS"/>
    <property type="molecule type" value="Genomic_RNA"/>
</dbReference>
<dbReference type="EMBL" id="AABR07002647">
    <property type="status" value="NOT_ANNOTATED_CDS"/>
    <property type="molecule type" value="Genomic_DNA"/>
</dbReference>
<dbReference type="EMBL" id="AABR07002648">
    <property type="status" value="NOT_ANNOTATED_CDS"/>
    <property type="molecule type" value="Genomic_DNA"/>
</dbReference>
<dbReference type="PIR" id="A38218">
    <property type="entry name" value="A38218"/>
</dbReference>
<dbReference type="RefSeq" id="NP_001258061.1">
    <property type="nucleotide sequence ID" value="NM_001271132.1"/>
</dbReference>
<dbReference type="RefSeq" id="XP_006228474.1">
    <property type="nucleotide sequence ID" value="XM_006228412.3"/>
</dbReference>
<dbReference type="RefSeq" id="XP_008757141.1">
    <property type="nucleotide sequence ID" value="XM_008758919.3"/>
</dbReference>
<dbReference type="RefSeq" id="XP_038965966.1">
    <property type="nucleotide sequence ID" value="XM_039110038.2"/>
</dbReference>
<dbReference type="RefSeq" id="XP_063144132.1">
    <property type="nucleotide sequence ID" value="XM_063288062.1"/>
</dbReference>
<dbReference type="RefSeq" id="XP_063144136.1">
    <property type="nucleotide sequence ID" value="XM_063288066.1"/>
</dbReference>
<dbReference type="PDB" id="5IRC">
    <property type="method" value="X-ray"/>
    <property type="resolution" value="1.72 A"/>
    <property type="chains" value="A/B=1242-1439"/>
</dbReference>
<dbReference type="PDB" id="6D4G">
    <property type="method" value="X-ray"/>
    <property type="resolution" value="2.80 A"/>
    <property type="chains" value="A/B=1-266"/>
</dbReference>
<dbReference type="PDBsum" id="5IRC"/>
<dbReference type="PDBsum" id="6D4G"/>
<dbReference type="BMRB" id="P81128"/>
<dbReference type="SMR" id="P81128"/>
<dbReference type="FunCoup" id="P81128">
    <property type="interactions" value="1522"/>
</dbReference>
<dbReference type="STRING" id="10116.ENSRNOP00000021223"/>
<dbReference type="GlyGen" id="P81128">
    <property type="glycosylation" value="2 sites"/>
</dbReference>
<dbReference type="iPTMnet" id="P81128"/>
<dbReference type="PhosphoSitePlus" id="P81128"/>
<dbReference type="jPOST" id="P81128"/>
<dbReference type="PaxDb" id="10116-ENSRNOP00000021223"/>
<dbReference type="Ensembl" id="ENSRNOT00000090519.2">
    <property type="protein sequence ID" value="ENSRNOP00000075649.1"/>
    <property type="gene ID" value="ENSRNOG00000015852.5"/>
</dbReference>
<dbReference type="GeneID" id="306400"/>
<dbReference type="KEGG" id="rno:306400"/>
<dbReference type="UCSC" id="RGD:1308738">
    <property type="organism name" value="rat"/>
</dbReference>
<dbReference type="AGR" id="RGD:1308738"/>
<dbReference type="CTD" id="2909"/>
<dbReference type="RGD" id="1308738">
    <property type="gene designation" value="Arhgap35"/>
</dbReference>
<dbReference type="eggNOG" id="KOG4271">
    <property type="taxonomic scope" value="Eukaryota"/>
</dbReference>
<dbReference type="GeneTree" id="ENSGT01030000234635"/>
<dbReference type="InParanoid" id="P81128"/>
<dbReference type="OMA" id="PSCPACI"/>
<dbReference type="OrthoDB" id="9994905at2759"/>
<dbReference type="Reactome" id="R-RNO-416550">
    <property type="pathway name" value="Sema4D mediated inhibition of cell attachment and migration"/>
</dbReference>
<dbReference type="Reactome" id="R-RNO-8849471">
    <property type="pathway name" value="PTK6 Regulates RHO GTPases, RAS GTPase and MAP kinases"/>
</dbReference>
<dbReference type="Reactome" id="R-RNO-8980692">
    <property type="pathway name" value="RHOA GTPase cycle"/>
</dbReference>
<dbReference type="Reactome" id="R-RNO-9013026">
    <property type="pathway name" value="RHOB GTPase cycle"/>
</dbReference>
<dbReference type="Reactome" id="R-RNO-9013148">
    <property type="pathway name" value="CDC42 GTPase cycle"/>
</dbReference>
<dbReference type="Reactome" id="R-RNO-9013149">
    <property type="pathway name" value="RAC1 GTPase cycle"/>
</dbReference>
<dbReference type="Reactome" id="R-RNO-9013404">
    <property type="pathway name" value="RAC2 GTPase cycle"/>
</dbReference>
<dbReference type="Reactome" id="R-RNO-9013405">
    <property type="pathway name" value="RHOD GTPase cycle"/>
</dbReference>
<dbReference type="Reactome" id="R-RNO-9013406">
    <property type="pathway name" value="RHOQ GTPase cycle"/>
</dbReference>
<dbReference type="Reactome" id="R-RNO-9013408">
    <property type="pathway name" value="RHOG GTPase cycle"/>
</dbReference>
<dbReference type="Reactome" id="R-RNO-9013409">
    <property type="pathway name" value="RHOJ GTPase cycle"/>
</dbReference>
<dbReference type="Reactome" id="R-RNO-9696264">
    <property type="pathway name" value="RND3 GTPase cycle"/>
</dbReference>
<dbReference type="Reactome" id="R-RNO-9696270">
    <property type="pathway name" value="RND2 GTPase cycle"/>
</dbReference>
<dbReference type="Reactome" id="R-RNO-9696273">
    <property type="pathway name" value="RND1 GTPase cycle"/>
</dbReference>
<dbReference type="PRO" id="PR:P81128"/>
<dbReference type="Proteomes" id="UP000002494">
    <property type="component" value="Chromosome 1"/>
</dbReference>
<dbReference type="Bgee" id="ENSRNOG00000015852">
    <property type="expression patterns" value="Expressed in frontal cortex and 19 other cell types or tissues"/>
</dbReference>
<dbReference type="ExpressionAtlas" id="P81128">
    <property type="expression patterns" value="baseline and differential"/>
</dbReference>
<dbReference type="GO" id="GO:0015629">
    <property type="term" value="C:actin cytoskeleton"/>
    <property type="evidence" value="ECO:0000266"/>
    <property type="project" value="RGD"/>
</dbReference>
<dbReference type="GO" id="GO:0036064">
    <property type="term" value="C:ciliary basal body"/>
    <property type="evidence" value="ECO:0000250"/>
    <property type="project" value="UniProtKB"/>
</dbReference>
<dbReference type="GO" id="GO:0005737">
    <property type="term" value="C:cytoplasm"/>
    <property type="evidence" value="ECO:0000266"/>
    <property type="project" value="RGD"/>
</dbReference>
<dbReference type="GO" id="GO:0005829">
    <property type="term" value="C:cytosol"/>
    <property type="evidence" value="ECO:0000318"/>
    <property type="project" value="GO_Central"/>
</dbReference>
<dbReference type="GO" id="GO:0005634">
    <property type="term" value="C:nucleus"/>
    <property type="evidence" value="ECO:0007669"/>
    <property type="project" value="UniProtKB-SubCell"/>
</dbReference>
<dbReference type="GO" id="GO:0005886">
    <property type="term" value="C:plasma membrane"/>
    <property type="evidence" value="ECO:0007669"/>
    <property type="project" value="UniProtKB-SubCell"/>
</dbReference>
<dbReference type="GO" id="GO:0003677">
    <property type="term" value="F:DNA binding"/>
    <property type="evidence" value="ECO:0007669"/>
    <property type="project" value="UniProtKB-KW"/>
</dbReference>
<dbReference type="GO" id="GO:0005525">
    <property type="term" value="F:GTP binding"/>
    <property type="evidence" value="ECO:0007669"/>
    <property type="project" value="UniProtKB-KW"/>
</dbReference>
<dbReference type="GO" id="GO:0032794">
    <property type="term" value="F:GTPase activating protein binding"/>
    <property type="evidence" value="ECO:0000353"/>
    <property type="project" value="RGD"/>
</dbReference>
<dbReference type="GO" id="GO:0005096">
    <property type="term" value="F:GTPase activator activity"/>
    <property type="evidence" value="ECO:0000314"/>
    <property type="project" value="UniProtKB"/>
</dbReference>
<dbReference type="GO" id="GO:0003924">
    <property type="term" value="F:GTPase activity"/>
    <property type="evidence" value="ECO:0007669"/>
    <property type="project" value="InterPro"/>
</dbReference>
<dbReference type="GO" id="GO:0005543">
    <property type="term" value="F:phospholipid binding"/>
    <property type="evidence" value="ECO:0000250"/>
    <property type="project" value="UniProtKB"/>
</dbReference>
<dbReference type="GO" id="GO:0044877">
    <property type="term" value="F:protein-containing complex binding"/>
    <property type="evidence" value="ECO:0000314"/>
    <property type="project" value="RGD"/>
</dbReference>
<dbReference type="GO" id="GO:0007411">
    <property type="term" value="P:axon guidance"/>
    <property type="evidence" value="ECO:0000250"/>
    <property type="project" value="UniProtKB"/>
</dbReference>
<dbReference type="GO" id="GO:0007413">
    <property type="term" value="P:axonal fasciculation"/>
    <property type="evidence" value="ECO:0000250"/>
    <property type="project" value="UniProtKB"/>
</dbReference>
<dbReference type="GO" id="GO:0043010">
    <property type="term" value="P:camera-type eye development"/>
    <property type="evidence" value="ECO:0000266"/>
    <property type="project" value="RGD"/>
</dbReference>
<dbReference type="GO" id="GO:0016477">
    <property type="term" value="P:cell migration"/>
    <property type="evidence" value="ECO:0000250"/>
    <property type="project" value="UniProtKB"/>
</dbReference>
<dbReference type="GO" id="GO:0021955">
    <property type="term" value="P:central nervous system neuron axonogenesis"/>
    <property type="evidence" value="ECO:0000250"/>
    <property type="project" value="UniProtKB"/>
</dbReference>
<dbReference type="GO" id="GO:0030950">
    <property type="term" value="P:establishment or maintenance of actin cytoskeleton polarity"/>
    <property type="evidence" value="ECO:0000250"/>
    <property type="project" value="UniProtKB"/>
</dbReference>
<dbReference type="GO" id="GO:0030900">
    <property type="term" value="P:forebrain development"/>
    <property type="evidence" value="ECO:0000266"/>
    <property type="project" value="RGD"/>
</dbReference>
<dbReference type="GO" id="GO:0030879">
    <property type="term" value="P:mammary gland development"/>
    <property type="evidence" value="ECO:0000250"/>
    <property type="project" value="UniProtKB"/>
</dbReference>
<dbReference type="GO" id="GO:0035024">
    <property type="term" value="P:negative regulation of Rho protein signal transduction"/>
    <property type="evidence" value="ECO:0000266"/>
    <property type="project" value="RGD"/>
</dbReference>
<dbReference type="GO" id="GO:0043116">
    <property type="term" value="P:negative regulation of vascular permeability"/>
    <property type="evidence" value="ECO:0000266"/>
    <property type="project" value="RGD"/>
</dbReference>
<dbReference type="GO" id="GO:0001843">
    <property type="term" value="P:neural tube closure"/>
    <property type="evidence" value="ECO:0000266"/>
    <property type="project" value="RGD"/>
</dbReference>
<dbReference type="GO" id="GO:0097485">
    <property type="term" value="P:neuron projection guidance"/>
    <property type="evidence" value="ECO:0000250"/>
    <property type="project" value="UniProtKB"/>
</dbReference>
<dbReference type="GO" id="GO:0045724">
    <property type="term" value="P:positive regulation of cilium assembly"/>
    <property type="evidence" value="ECO:0000250"/>
    <property type="project" value="UniProtKB"/>
</dbReference>
<dbReference type="GO" id="GO:0043547">
    <property type="term" value="P:positive regulation of GTPase activity"/>
    <property type="evidence" value="ECO:0000314"/>
    <property type="project" value="UniProtKB"/>
</dbReference>
<dbReference type="GO" id="GO:0010976">
    <property type="term" value="P:positive regulation of neuron projection development"/>
    <property type="evidence" value="ECO:0000250"/>
    <property type="project" value="UniProtKB"/>
</dbReference>
<dbReference type="GO" id="GO:0032956">
    <property type="term" value="P:regulation of actin cytoskeleton organization"/>
    <property type="evidence" value="ECO:0000250"/>
    <property type="project" value="UniProtKB"/>
</dbReference>
<dbReference type="GO" id="GO:0008064">
    <property type="term" value="P:regulation of actin polymerization or depolymerization"/>
    <property type="evidence" value="ECO:0000250"/>
    <property type="project" value="UniProtKB"/>
</dbReference>
<dbReference type="GO" id="GO:0050770">
    <property type="term" value="P:regulation of axonogenesis"/>
    <property type="evidence" value="ECO:0000250"/>
    <property type="project" value="UniProtKB"/>
</dbReference>
<dbReference type="GO" id="GO:0008360">
    <property type="term" value="P:regulation of cell shape"/>
    <property type="evidence" value="ECO:0000266"/>
    <property type="project" value="RGD"/>
</dbReference>
<dbReference type="GO" id="GO:0008361">
    <property type="term" value="P:regulation of cell size"/>
    <property type="evidence" value="ECO:0000318"/>
    <property type="project" value="GO_Central"/>
</dbReference>
<dbReference type="GO" id="GO:0007266">
    <property type="term" value="P:Rho protein signal transduction"/>
    <property type="evidence" value="ECO:0000266"/>
    <property type="project" value="RGD"/>
</dbReference>
<dbReference type="GO" id="GO:0044319">
    <property type="term" value="P:wound healing, spreading of cells"/>
    <property type="evidence" value="ECO:0000250"/>
    <property type="project" value="UniProtKB"/>
</dbReference>
<dbReference type="CDD" id="cd22221">
    <property type="entry name" value="pseudoGTPaseD_p190RhoGAP-A"/>
    <property type="match status" value="1"/>
</dbReference>
<dbReference type="CDD" id="cd04373">
    <property type="entry name" value="RhoGAP_p190"/>
    <property type="match status" value="1"/>
</dbReference>
<dbReference type="FunFam" id="1.10.10.440:FF:000007">
    <property type="entry name" value="Putative rho GTPase-activating protein 5"/>
    <property type="match status" value="1"/>
</dbReference>
<dbReference type="FunFam" id="3.40.50.300:FF:000349">
    <property type="entry name" value="Rho GTPase-activating protein 5"/>
    <property type="match status" value="1"/>
</dbReference>
<dbReference type="FunFam" id="1.10.555.10:FF:000021">
    <property type="entry name" value="rho GTPase-activating protein 5"/>
    <property type="match status" value="1"/>
</dbReference>
<dbReference type="Gene3D" id="1.10.10.440">
    <property type="entry name" value="FF domain"/>
    <property type="match status" value="2"/>
</dbReference>
<dbReference type="Gene3D" id="3.40.50.300">
    <property type="entry name" value="P-loop containing nucleotide triphosphate hydrolases"/>
    <property type="match status" value="1"/>
</dbReference>
<dbReference type="Gene3D" id="1.10.555.10">
    <property type="entry name" value="Rho GTPase activation protein"/>
    <property type="match status" value="1"/>
</dbReference>
<dbReference type="InterPro" id="IPR002713">
    <property type="entry name" value="FF_domain"/>
</dbReference>
<dbReference type="InterPro" id="IPR036517">
    <property type="entry name" value="FF_domain_sf"/>
</dbReference>
<dbReference type="InterPro" id="IPR027417">
    <property type="entry name" value="P-loop_NTPase"/>
</dbReference>
<dbReference type="InterPro" id="IPR039007">
    <property type="entry name" value="pG1"/>
</dbReference>
<dbReference type="InterPro" id="IPR051978">
    <property type="entry name" value="Rho-GAP_domain"/>
</dbReference>
<dbReference type="InterPro" id="IPR008936">
    <property type="entry name" value="Rho_GTPase_activation_prot"/>
</dbReference>
<dbReference type="InterPro" id="IPR032835">
    <property type="entry name" value="RhoGAP-FF1"/>
</dbReference>
<dbReference type="InterPro" id="IPR000198">
    <property type="entry name" value="RhoGAP_dom"/>
</dbReference>
<dbReference type="InterPro" id="IPR045786">
    <property type="entry name" value="RhoGAP_pG1_pG2"/>
</dbReference>
<dbReference type="InterPro" id="IPR039006">
    <property type="entry name" value="RhoGAP_pG2"/>
</dbReference>
<dbReference type="InterPro" id="IPR001806">
    <property type="entry name" value="Small_GTPase"/>
</dbReference>
<dbReference type="PANTHER" id="PTHR46005">
    <property type="entry name" value="RHO GTPASE-ACTIVATING PROTEIN 190"/>
    <property type="match status" value="1"/>
</dbReference>
<dbReference type="PANTHER" id="PTHR46005:SF1">
    <property type="entry name" value="RHO GTPASE-ACTIVATING PROTEIN 35"/>
    <property type="match status" value="1"/>
</dbReference>
<dbReference type="Pfam" id="PF23083">
    <property type="entry name" value="FF_RHG35_4th"/>
    <property type="match status" value="1"/>
</dbReference>
<dbReference type="Pfam" id="PF00071">
    <property type="entry name" value="Ras"/>
    <property type="match status" value="1"/>
</dbReference>
<dbReference type="Pfam" id="PF00620">
    <property type="entry name" value="RhoGAP"/>
    <property type="match status" value="1"/>
</dbReference>
<dbReference type="Pfam" id="PF16512">
    <property type="entry name" value="RhoGAP-FF1"/>
    <property type="match status" value="1"/>
</dbReference>
<dbReference type="Pfam" id="PF19518">
    <property type="entry name" value="RhoGAP_pG1_pG2"/>
    <property type="match status" value="1"/>
</dbReference>
<dbReference type="PRINTS" id="PR00449">
    <property type="entry name" value="RASTRNSFRMNG"/>
</dbReference>
<dbReference type="SMART" id="SM00441">
    <property type="entry name" value="FF"/>
    <property type="match status" value="4"/>
</dbReference>
<dbReference type="SMART" id="SM00324">
    <property type="entry name" value="RhoGAP"/>
    <property type="match status" value="1"/>
</dbReference>
<dbReference type="SUPFAM" id="SSF81698">
    <property type="entry name" value="FF domain"/>
    <property type="match status" value="1"/>
</dbReference>
<dbReference type="SUPFAM" id="SSF48350">
    <property type="entry name" value="GTPase activation domain, GAP"/>
    <property type="match status" value="1"/>
</dbReference>
<dbReference type="SUPFAM" id="SSF52540">
    <property type="entry name" value="P-loop containing nucleoside triphosphate hydrolases"/>
    <property type="match status" value="1"/>
</dbReference>
<dbReference type="PROSITE" id="PS51676">
    <property type="entry name" value="FF"/>
    <property type="match status" value="4"/>
</dbReference>
<dbReference type="PROSITE" id="PS51852">
    <property type="entry name" value="PG1"/>
    <property type="match status" value="1"/>
</dbReference>
<dbReference type="PROSITE" id="PS51853">
    <property type="entry name" value="PG2"/>
    <property type="match status" value="1"/>
</dbReference>
<dbReference type="PROSITE" id="PS50238">
    <property type="entry name" value="RHOGAP"/>
    <property type="match status" value="1"/>
</dbReference>
<accession>P81128</accession>
<accession>A0A0G2KB46</accession>
<sequence>MMMARKQDVRIPTYNISVVGLSGTEKEKGQCGIGKSCLCNRFVRPSADEFHLDHTSVLSTSDFGGRVVNNDHFLYWGEVSRSLEDCVECKMHIVEQTEFIDDQTFQPHRSTALQPYIKRAAATKLASAEKLMYFCTDQLGLEQDFEQKQMPDGKLLVDGFLLGIDVSRGMNRNFDDQLKFVSNLYNQLAKTKKPIVIVLTKCDEGVERYIRDAHTFALSKKNLQVVETSARSNVNVDLAFSTLVQLIDKSRGKTKIIPYFEALKQQSQQIATAKDKYEWLVSRIVKSHNENWLSVSRKMQASPEYQDYVYLEGTQKAKKLFLQHIHRLKHEHIERRRKLYLAALPLAFEALIPNLDEVDHLSCIKAKKLLETKPEFLKWFVVLEETPWDETSHIDNMENERIPFDLMDTVPAEQLYETHLEKLRNERKRAEMRRAFKENLETSPFITPGKPWEEARSFIMNEDFYQWLEESVYMDIYGKHQKQIIDRAKEEFQELLLEYSELFYELELDAKPSKEKMGVIQDVLGEEQRFKALQKLQAERDALILKHIHFVYHPTKETCPSCPACVDAKIEHLISSRFIRPSDRNQKNSLSDPNIDRINLVILGKDGLARELANEIRALCTNDDKYVIDGKMYELSLRPIEGNVRLPVNSFQTPTFQPHGCLCLYNSKESLSYVVESIEKSRESTLGRRDNHLVHLPLTLILVNKRGDTSGETLHSLIQQGQQIASKLQCVFLDPASAGIGYGRNINEKQISQVLKGLLDSKRNLNLVSSTASIKDLADVDLRIVMCLMCGDPFSADDILSPVLQSQTCKSSHCGSSNSVLLELPIGVHKKRIELSVLSYHSSFSIRKSRLVHGYIVFYSAKRKASLAMLRAFLCEVQDIIPIQLVALTDGAIDVLDNDLSREQLTEGEEIAQEIDGRFTSIPCSQPQHKLELFHPFFKDVVEKKNIIEATHMYDNVAEACSTTEEVFNSPRAGSPLCNSNLQDSEEDVEPPSYHLFREDATLPSLSKDHSKFSMELEGNDGLSFIMSNFESKLNNKVPPPVKPKPPVHFEITKDLSYLDQGHREGQRKSMSSSPWMPQDGFDPSDYAEPMDAVVKPRNEEENIYSVPHDSTQGKIITIRNINKAQSNGSGNGSDSEMDTSSLERGRKVSAVSKPVLYRTRCTRLGRFASYRTSFSVGSDDELGPIRKKEEDQASQGYKGDNAVIPYETDEDPRRRNILRSLRRNTKKPKPKPRPSITKATWESNYFGVPLTTVVTPEKPIPIFIERCIEYIEATGLSTEGIYRVSGNKSEMESLQRQFDQDHNLDLAEKDFTVNTVAGAMKSFFSELPDPLVPYSMQIDLVEAHKINDREQKLHALKEVLKKFPKENHEVFKYVISHLNRVSHNNKVNLMTSENLSICFWPTLMRPDFSSMDALTATRSYQTIIELFIQQCPFFFYNRPISEPPGAAPGSPSAMAPTVPFLTSTPATSQPSPPQSPPPTPQSPMQPLLSSQLQAEHTL</sequence>
<name>RHG35_RAT</name>
<feature type="chain" id="PRO_0000056732" description="Rho GTPase-activating protein 35">
    <location>
        <begin position="1"/>
        <end position="1499"/>
    </location>
</feature>
<feature type="domain" description="FF 1">
    <location>
        <begin position="270"/>
        <end position="327"/>
    </location>
</feature>
<feature type="domain" description="FF 2">
    <location>
        <begin position="368"/>
        <end position="422"/>
    </location>
</feature>
<feature type="domain" description="FF 3">
    <location>
        <begin position="429"/>
        <end position="483"/>
    </location>
</feature>
<feature type="domain" description="FF 4">
    <location>
        <begin position="485"/>
        <end position="550"/>
    </location>
</feature>
<feature type="domain" description="pG1 pseudoGTPase" evidence="5">
    <location>
        <begin position="592"/>
        <end position="767"/>
    </location>
</feature>
<feature type="domain" description="pG2 pseudoGTPase" evidence="6">
    <location>
        <begin position="783"/>
        <end position="947"/>
    </location>
</feature>
<feature type="domain" description="Rho-GAP" evidence="4">
    <location>
        <begin position="1249"/>
        <end position="1436"/>
    </location>
</feature>
<feature type="region of interest" description="Has GTPase activity, required for proper localization" evidence="2">
    <location>
        <begin position="1"/>
        <end position="266"/>
    </location>
</feature>
<feature type="region of interest" description="Disordered" evidence="7">
    <location>
        <begin position="1124"/>
        <end position="1148"/>
    </location>
</feature>
<feature type="region of interest" description="Disordered" evidence="7">
    <location>
        <begin position="1177"/>
        <end position="1207"/>
    </location>
</feature>
<feature type="region of interest" description="Required for phospholipid binding and regulation of the substrate preference" evidence="3">
    <location>
        <begin position="1213"/>
        <end position="1236"/>
    </location>
</feature>
<feature type="region of interest" description="Disordered" evidence="7">
    <location>
        <begin position="1446"/>
        <end position="1499"/>
    </location>
</feature>
<feature type="compositionally biased region" description="Polar residues" evidence="7">
    <location>
        <begin position="1124"/>
        <end position="1141"/>
    </location>
</feature>
<feature type="compositionally biased region" description="Low complexity" evidence="7">
    <location>
        <begin position="1448"/>
        <end position="1470"/>
    </location>
</feature>
<feature type="compositionally biased region" description="Pro residues" evidence="7">
    <location>
        <begin position="1471"/>
        <end position="1484"/>
    </location>
</feature>
<feature type="compositionally biased region" description="Low complexity" evidence="7">
    <location>
        <begin position="1485"/>
        <end position="1499"/>
    </location>
</feature>
<feature type="binding site" evidence="3">
    <location>
        <position position="28"/>
    </location>
    <ligand>
        <name>GTP</name>
        <dbReference type="ChEBI" id="CHEBI:37565"/>
    </ligand>
</feature>
<feature type="binding site" evidence="3">
    <location>
        <begin position="33"/>
        <end position="37"/>
    </location>
    <ligand>
        <name>GTP</name>
        <dbReference type="ChEBI" id="CHEBI:37565"/>
    </ligand>
</feature>
<feature type="binding site" evidence="3">
    <location>
        <position position="52"/>
    </location>
    <ligand>
        <name>GTP</name>
        <dbReference type="ChEBI" id="CHEBI:37565"/>
    </ligand>
</feature>
<feature type="binding site" evidence="3">
    <location>
        <position position="56"/>
    </location>
    <ligand>
        <name>GTP</name>
        <dbReference type="ChEBI" id="CHEBI:37565"/>
    </ligand>
</feature>
<feature type="binding site" evidence="3">
    <location>
        <begin position="95"/>
        <end position="97"/>
    </location>
    <ligand>
        <name>GTP</name>
        <dbReference type="ChEBI" id="CHEBI:37565"/>
    </ligand>
</feature>
<feature type="binding site" evidence="3">
    <location>
        <begin position="201"/>
        <end position="203"/>
    </location>
    <ligand>
        <name>GTP</name>
        <dbReference type="ChEBI" id="CHEBI:37565"/>
    </ligand>
</feature>
<feature type="binding site" evidence="3">
    <location>
        <begin position="229"/>
        <end position="231"/>
    </location>
    <ligand>
        <name>GTP</name>
        <dbReference type="ChEBI" id="CHEBI:37565"/>
    </ligand>
</feature>
<feature type="site" description="Arginine finger; crucial for GTP hydrolysis by stabilizing the transition state" evidence="4">
    <location>
        <position position="1284"/>
    </location>
</feature>
<feature type="modified residue" description="Phosphotyrosine" evidence="3">
    <location>
        <position position="308"/>
    </location>
</feature>
<feature type="modified residue" description="Phosphoserine" evidence="13">
    <location>
        <position position="589"/>
    </location>
</feature>
<feature type="modified residue" description="Phosphoserine" evidence="3">
    <location>
        <position position="770"/>
    </location>
</feature>
<feature type="modified residue" description="Phosphoserine" evidence="3">
    <location>
        <position position="773"/>
    </location>
</feature>
<feature type="modified residue" description="Phosphoserine" evidence="3">
    <location>
        <position position="970"/>
    </location>
</feature>
<feature type="modified residue" description="Phosphoserine" evidence="13">
    <location>
        <position position="975"/>
    </location>
</feature>
<feature type="modified residue" description="Phosphoserine" evidence="13">
    <location>
        <position position="985"/>
    </location>
</feature>
<feature type="modified residue" description="Phosphoserine" evidence="3">
    <location>
        <position position="1072"/>
    </location>
</feature>
<feature type="modified residue" description="Phosphotyrosine" evidence="3">
    <location>
        <position position="1087"/>
    </location>
</feature>
<feature type="modified residue" description="Phosphotyrosine; by ABL2 and PTK6" evidence="3">
    <location>
        <position position="1105"/>
    </location>
</feature>
<feature type="modified residue" description="Phosphoserine" evidence="13">
    <location>
        <position position="1134"/>
    </location>
</feature>
<feature type="modified residue" description="Phosphoserine" evidence="2">
    <location>
        <position position="1142"/>
    </location>
</feature>
<feature type="modified residue" description="Phosphoserine" evidence="3">
    <location>
        <position position="1150"/>
    </location>
</feature>
<feature type="modified residue" description="Phosphoserine" evidence="3">
    <location>
        <position position="1176"/>
    </location>
</feature>
<feature type="modified residue" description="Phosphoserine" evidence="13">
    <location>
        <position position="1179"/>
    </location>
</feature>
<feature type="modified residue" description="Phosphoserine" evidence="3">
    <location>
        <position position="1221"/>
    </location>
</feature>
<feature type="modified residue" description="Phosphothreonine" evidence="3">
    <location>
        <position position="1226"/>
    </location>
</feature>
<feature type="modified residue" description="Phosphoserine" evidence="3">
    <location>
        <position position="1236"/>
    </location>
</feature>
<feature type="modified residue" description="Phosphoserine" evidence="2">
    <location>
        <position position="1472"/>
    </location>
</feature>
<feature type="modified residue" description="Phosphoserine" evidence="2">
    <location>
        <position position="1476"/>
    </location>
</feature>
<feature type="modified residue" description="Phosphothreonine" evidence="2">
    <location>
        <position position="1480"/>
    </location>
</feature>
<feature type="modified residue" description="Phosphoserine" evidence="2">
    <location>
        <position position="1483"/>
    </location>
</feature>
<feature type="mutagenesis site" description="Disrupts GTP-binding. No direct effect on GAP activity 'in vitro' but affects the activity regulation 'in vivo'." evidence="10">
    <original>S</original>
    <variation>N</variation>
    <location>
        <position position="36"/>
    </location>
</feature>
<feature type="mutagenesis site" description="Abolishes GAP activity." evidence="10">
    <original>R</original>
    <variation>A</variation>
    <location>
        <position position="1284"/>
    </location>
</feature>
<feature type="mutagenesis site" description="Abolishes phosphorylation by MAPK, increases functional activity and enhances retention in peripheral membranes; when associated with 1476-A--A-1483." evidence="9">
    <original>S</original>
    <variation>A</variation>
    <location>
        <position position="1451"/>
    </location>
</feature>
<feature type="mutagenesis site" description="Abolishes phosphorylation by MAPK, increases functional activity and enhances retention in peripheral membranes; when associated with A-1451." evidence="9">
    <original>SPPPTPQS</original>
    <variation>APPPAPQA</variation>
    <location>
        <begin position="1476"/>
        <end position="1483"/>
    </location>
</feature>
<feature type="strand" evidence="15">
    <location>
        <begin position="15"/>
        <end position="19"/>
    </location>
</feature>
<feature type="turn" evidence="15">
    <location>
        <begin position="25"/>
        <end position="30"/>
    </location>
</feature>
<feature type="helix" evidence="15">
    <location>
        <begin position="35"/>
        <end position="43"/>
    </location>
</feature>
<feature type="turn" evidence="15">
    <location>
        <begin position="47"/>
        <end position="49"/>
    </location>
</feature>
<feature type="helix" evidence="15">
    <location>
        <begin position="60"/>
        <end position="63"/>
    </location>
</feature>
<feature type="turn" evidence="15">
    <location>
        <begin position="66"/>
        <end position="70"/>
    </location>
</feature>
<feature type="strand" evidence="15">
    <location>
        <begin position="72"/>
        <end position="79"/>
    </location>
</feature>
<feature type="strand" evidence="15">
    <location>
        <begin position="91"/>
        <end position="96"/>
    </location>
</feature>
<feature type="turn" evidence="15">
    <location>
        <begin position="102"/>
        <end position="104"/>
    </location>
</feature>
<feature type="helix" evidence="15">
    <location>
        <begin position="116"/>
        <end position="120"/>
    </location>
</feature>
<feature type="strand" evidence="15">
    <location>
        <begin position="123"/>
        <end position="126"/>
    </location>
</feature>
<feature type="helix" evidence="15">
    <location>
        <begin position="136"/>
        <end position="138"/>
    </location>
</feature>
<feature type="helix" evidence="15">
    <location>
        <begin position="142"/>
        <end position="144"/>
    </location>
</feature>
<feature type="helix" evidence="15">
    <location>
        <begin position="151"/>
        <end position="153"/>
    </location>
</feature>
<feature type="strand" evidence="15">
    <location>
        <begin position="154"/>
        <end position="156"/>
    </location>
</feature>
<feature type="strand" evidence="15">
    <location>
        <begin position="159"/>
        <end position="165"/>
    </location>
</feature>
<feature type="turn" evidence="15">
    <location>
        <begin position="169"/>
        <end position="171"/>
    </location>
</feature>
<feature type="helix" evidence="15">
    <location>
        <begin position="174"/>
        <end position="190"/>
    </location>
</feature>
<feature type="strand" evidence="15">
    <location>
        <begin position="195"/>
        <end position="200"/>
    </location>
</feature>
<feature type="helix" evidence="15">
    <location>
        <begin position="202"/>
        <end position="204"/>
    </location>
</feature>
<feature type="helix" evidence="15">
    <location>
        <begin position="207"/>
        <end position="218"/>
    </location>
</feature>
<feature type="strand" evidence="15">
    <location>
        <begin position="224"/>
        <end position="227"/>
    </location>
</feature>
<feature type="turn" evidence="15">
    <location>
        <begin position="230"/>
        <end position="233"/>
    </location>
</feature>
<feature type="helix" evidence="15">
    <location>
        <begin position="236"/>
        <end position="251"/>
    </location>
</feature>
<feature type="strand" evidence="14">
    <location>
        <begin position="1245"/>
        <end position="1249"/>
    </location>
</feature>
<feature type="helix" evidence="14">
    <location>
        <begin position="1251"/>
        <end position="1254"/>
    </location>
</feature>
<feature type="strand" evidence="14">
    <location>
        <begin position="1257"/>
        <end position="1259"/>
    </location>
</feature>
<feature type="helix" evidence="14">
    <location>
        <begin position="1263"/>
        <end position="1275"/>
    </location>
</feature>
<feature type="turn" evidence="14">
    <location>
        <begin position="1280"/>
        <end position="1284"/>
    </location>
</feature>
<feature type="helix" evidence="14">
    <location>
        <begin position="1289"/>
        <end position="1301"/>
    </location>
</feature>
<feature type="turn" evidence="14">
    <location>
        <begin position="1307"/>
        <end position="1309"/>
    </location>
</feature>
<feature type="helix" evidence="14">
    <location>
        <begin position="1314"/>
        <end position="1327"/>
    </location>
</feature>
<feature type="strand" evidence="14">
    <location>
        <begin position="1328"/>
        <end position="1330"/>
    </location>
</feature>
<feature type="helix" evidence="14">
    <location>
        <begin position="1335"/>
        <end position="1345"/>
    </location>
</feature>
<feature type="helix" evidence="14">
    <location>
        <begin position="1350"/>
        <end position="1361"/>
    </location>
</feature>
<feature type="helix" evidence="14">
    <location>
        <begin position="1366"/>
        <end position="1383"/>
    </location>
</feature>
<feature type="helix" evidence="14">
    <location>
        <begin position="1386"/>
        <end position="1389"/>
    </location>
</feature>
<feature type="helix" evidence="14">
    <location>
        <begin position="1393"/>
        <end position="1398"/>
    </location>
</feature>
<feature type="helix" evidence="14">
    <location>
        <begin position="1401"/>
        <end position="1405"/>
    </location>
</feature>
<feature type="helix" evidence="14">
    <location>
        <begin position="1412"/>
        <end position="1416"/>
    </location>
</feature>
<feature type="helix" evidence="14">
    <location>
        <begin position="1419"/>
        <end position="1430"/>
    </location>
</feature>
<feature type="helix" evidence="14">
    <location>
        <begin position="1432"/>
        <end position="1436"/>
    </location>
</feature>
<reference key="1">
    <citation type="journal article" date="1992" name="Cell">
        <title>Molecular cloning of cDNAs encoding the GAP-associated protein p190: implications for a signaling pathway from ras to the nucleus.</title>
        <authorList>
            <person name="Settleman J."/>
            <person name="Narasimhan V."/>
            <person name="Foster L.C."/>
            <person name="Weinberg R.A."/>
        </authorList>
    </citation>
    <scope>NUCLEOTIDE SEQUENCE [GENOMIC RNA]</scope>
    <scope>PROTEIN SEQUENCE OF 379-391; 491-506 AND 1304-1322</scope>
    <scope>PHOSPHORYLATION</scope>
    <scope>SUBCELLULAR LOCATION</scope>
</reference>
<reference key="2">
    <citation type="journal article" date="2004" name="Nature">
        <title>Genome sequence of the Brown Norway rat yields insights into mammalian evolution.</title>
        <authorList>
            <person name="Gibbs R.A."/>
            <person name="Weinstock G.M."/>
            <person name="Metzker M.L."/>
            <person name="Muzny D.M."/>
            <person name="Sodergren E.J."/>
            <person name="Scherer S."/>
            <person name="Scott G."/>
            <person name="Steffen D."/>
            <person name="Worley K.C."/>
            <person name="Burch P.E."/>
            <person name="Okwuonu G."/>
            <person name="Hines S."/>
            <person name="Lewis L."/>
            <person name="Deramo C."/>
            <person name="Delgado O."/>
            <person name="Dugan-Rocha S."/>
            <person name="Miner G."/>
            <person name="Morgan M."/>
            <person name="Hawes A."/>
            <person name="Gill R."/>
            <person name="Holt R.A."/>
            <person name="Adams M.D."/>
            <person name="Amanatides P.G."/>
            <person name="Baden-Tillson H."/>
            <person name="Barnstead M."/>
            <person name="Chin S."/>
            <person name="Evans C.A."/>
            <person name="Ferriera S."/>
            <person name="Fosler C."/>
            <person name="Glodek A."/>
            <person name="Gu Z."/>
            <person name="Jennings D."/>
            <person name="Kraft C.L."/>
            <person name="Nguyen T."/>
            <person name="Pfannkoch C.M."/>
            <person name="Sitter C."/>
            <person name="Sutton G.G."/>
            <person name="Venter J.C."/>
            <person name="Woodage T."/>
            <person name="Smith D."/>
            <person name="Lee H.-M."/>
            <person name="Gustafson E."/>
            <person name="Cahill P."/>
            <person name="Kana A."/>
            <person name="Doucette-Stamm L."/>
            <person name="Weinstock K."/>
            <person name="Fechtel K."/>
            <person name="Weiss R.B."/>
            <person name="Dunn D.M."/>
            <person name="Green E.D."/>
            <person name="Blakesley R.W."/>
            <person name="Bouffard G.G."/>
            <person name="De Jong P.J."/>
            <person name="Osoegawa K."/>
            <person name="Zhu B."/>
            <person name="Marra M."/>
            <person name="Schein J."/>
            <person name="Bosdet I."/>
            <person name="Fjell C."/>
            <person name="Jones S."/>
            <person name="Krzywinski M."/>
            <person name="Mathewson C."/>
            <person name="Siddiqui A."/>
            <person name="Wye N."/>
            <person name="McPherson J."/>
            <person name="Zhao S."/>
            <person name="Fraser C.M."/>
            <person name="Shetty J."/>
            <person name="Shatsman S."/>
            <person name="Geer K."/>
            <person name="Chen Y."/>
            <person name="Abramzon S."/>
            <person name="Nierman W.C."/>
            <person name="Havlak P.H."/>
            <person name="Chen R."/>
            <person name="Durbin K.J."/>
            <person name="Egan A."/>
            <person name="Ren Y."/>
            <person name="Song X.-Z."/>
            <person name="Li B."/>
            <person name="Liu Y."/>
            <person name="Qin X."/>
            <person name="Cawley S."/>
            <person name="Cooney A.J."/>
            <person name="D'Souza L.M."/>
            <person name="Martin K."/>
            <person name="Wu J.Q."/>
            <person name="Gonzalez-Garay M.L."/>
            <person name="Jackson A.R."/>
            <person name="Kalafus K.J."/>
            <person name="McLeod M.P."/>
            <person name="Milosavljevic A."/>
            <person name="Virk D."/>
            <person name="Volkov A."/>
            <person name="Wheeler D.A."/>
            <person name="Zhang Z."/>
            <person name="Bailey J.A."/>
            <person name="Eichler E.E."/>
            <person name="Tuzun E."/>
            <person name="Birney E."/>
            <person name="Mongin E."/>
            <person name="Ureta-Vidal A."/>
            <person name="Woodwark C."/>
            <person name="Zdobnov E."/>
            <person name="Bork P."/>
            <person name="Suyama M."/>
            <person name="Torrents D."/>
            <person name="Alexandersson M."/>
            <person name="Trask B.J."/>
            <person name="Young J.M."/>
            <person name="Huang H."/>
            <person name="Wang H."/>
            <person name="Xing H."/>
            <person name="Daniels S."/>
            <person name="Gietzen D."/>
            <person name="Schmidt J."/>
            <person name="Stevens K."/>
            <person name="Vitt U."/>
            <person name="Wingrove J."/>
            <person name="Camara F."/>
            <person name="Mar Alba M."/>
            <person name="Abril J.F."/>
            <person name="Guigo R."/>
            <person name="Smit A."/>
            <person name="Dubchak I."/>
            <person name="Rubin E.M."/>
            <person name="Couronne O."/>
            <person name="Poliakov A."/>
            <person name="Huebner N."/>
            <person name="Ganten D."/>
            <person name="Goesele C."/>
            <person name="Hummel O."/>
            <person name="Kreitler T."/>
            <person name="Lee Y.-A."/>
            <person name="Monti J."/>
            <person name="Schulz H."/>
            <person name="Zimdahl H."/>
            <person name="Himmelbauer H."/>
            <person name="Lehrach H."/>
            <person name="Jacob H.J."/>
            <person name="Bromberg S."/>
            <person name="Gullings-Handley J."/>
            <person name="Jensen-Seaman M.I."/>
            <person name="Kwitek A.E."/>
            <person name="Lazar J."/>
            <person name="Pasko D."/>
            <person name="Tonellato P.J."/>
            <person name="Twigger S."/>
            <person name="Ponting C.P."/>
            <person name="Duarte J.M."/>
            <person name="Rice S."/>
            <person name="Goodstadt L."/>
            <person name="Beatson S.A."/>
            <person name="Emes R.D."/>
            <person name="Winter E.E."/>
            <person name="Webber C."/>
            <person name="Brandt P."/>
            <person name="Nyakatura G."/>
            <person name="Adetobi M."/>
            <person name="Chiaromonte F."/>
            <person name="Elnitski L."/>
            <person name="Eswara P."/>
            <person name="Hardison R.C."/>
            <person name="Hou M."/>
            <person name="Kolbe D."/>
            <person name="Makova K."/>
            <person name="Miller W."/>
            <person name="Nekrutenko A."/>
            <person name="Riemer C."/>
            <person name="Schwartz S."/>
            <person name="Taylor J."/>
            <person name="Yang S."/>
            <person name="Zhang Y."/>
            <person name="Lindpaintner K."/>
            <person name="Andrews T.D."/>
            <person name="Caccamo M."/>
            <person name="Clamp M."/>
            <person name="Clarke L."/>
            <person name="Curwen V."/>
            <person name="Durbin R.M."/>
            <person name="Eyras E."/>
            <person name="Searle S.M."/>
            <person name="Cooper G.M."/>
            <person name="Batzoglou S."/>
            <person name="Brudno M."/>
            <person name="Sidow A."/>
            <person name="Stone E.A."/>
            <person name="Payseur B.A."/>
            <person name="Bourque G."/>
            <person name="Lopez-Otin C."/>
            <person name="Puente X.S."/>
            <person name="Chakrabarti K."/>
            <person name="Chatterji S."/>
            <person name="Dewey C."/>
            <person name="Pachter L."/>
            <person name="Bray N."/>
            <person name="Yap V.B."/>
            <person name="Caspi A."/>
            <person name="Tesler G."/>
            <person name="Pevzner P.A."/>
            <person name="Haussler D."/>
            <person name="Roskin K.M."/>
            <person name="Baertsch R."/>
            <person name="Clawson H."/>
            <person name="Furey T.S."/>
            <person name="Hinrichs A.S."/>
            <person name="Karolchik D."/>
            <person name="Kent W.J."/>
            <person name="Rosenbloom K.R."/>
            <person name="Trumbower H."/>
            <person name="Weirauch M."/>
            <person name="Cooper D.N."/>
            <person name="Stenson P.D."/>
            <person name="Ma B."/>
            <person name="Brent M."/>
            <person name="Arumugam M."/>
            <person name="Shteynberg D."/>
            <person name="Copley R.R."/>
            <person name="Taylor M.S."/>
            <person name="Riethman H."/>
            <person name="Mudunuri U."/>
            <person name="Peterson J."/>
            <person name="Guyer M."/>
            <person name="Felsenfeld A."/>
            <person name="Old S."/>
            <person name="Mockrin S."/>
            <person name="Collins F.S."/>
        </authorList>
    </citation>
    <scope>NUCLEOTIDE SEQUENCE [LARGE SCALE GENOMIC DNA]</scope>
    <source>
        <strain>Brown Norway</strain>
    </source>
</reference>
<reference key="3">
    <citation type="journal article" date="1998" name="J. Biol. Chem.">
        <title>The function of the p190 Rho GTPase-activating protein is controlled by its N-terminal GTP binding domain.</title>
        <authorList>
            <person name="Tatsis N."/>
            <person name="Lannigan D.A."/>
            <person name="Macara I.G."/>
        </authorList>
    </citation>
    <scope>FUNCTION</scope>
    <scope>GTP-BINDING</scope>
    <scope>MUTAGENESIS OF SER-36 AND ARG-1284</scope>
</reference>
<reference key="4">
    <citation type="journal article" date="2010" name="Mol. Cell. Biol.">
        <title>Extracellular signal-regulated kinase promotes Rho-dependent focal adhesion formation by suppressing p190A RhoGAP.</title>
        <authorList>
            <person name="Pullikuth A.K."/>
            <person name="Catling A.D."/>
        </authorList>
    </citation>
    <scope>FUNCTION</scope>
    <scope>MUTAGENESIS OF SER-1451 AND 1476-SER--SER-1483</scope>
    <scope>PHOSPHORYLATION</scope>
</reference>
<reference key="5">
    <citation type="journal article" date="2012" name="Nat. Commun.">
        <title>Quantitative maps of protein phosphorylation sites across 14 different rat organs and tissues.</title>
        <authorList>
            <person name="Lundby A."/>
            <person name="Secher A."/>
            <person name="Lage K."/>
            <person name="Nordsborg N.B."/>
            <person name="Dmytriyev A."/>
            <person name="Lundby C."/>
            <person name="Olsen J.V."/>
        </authorList>
    </citation>
    <scope>PHOSPHORYLATION [LARGE SCALE ANALYSIS] AT SER-589; SER-975; SER-985; SER-1134 AND SER-1179</scope>
    <scope>IDENTIFICATION BY MASS SPECTROMETRY [LARGE SCALE ANALYSIS]</scope>
</reference>
<proteinExistence type="evidence at protein level"/>